<organism>
    <name type="scientific">Chlamydia felis (strain Fe/C-56)</name>
    <name type="common">Chlamydophila felis</name>
    <dbReference type="NCBI Taxonomy" id="264202"/>
    <lineage>
        <taxon>Bacteria</taxon>
        <taxon>Pseudomonadati</taxon>
        <taxon>Chlamydiota</taxon>
        <taxon>Chlamydiia</taxon>
        <taxon>Chlamydiales</taxon>
        <taxon>Chlamydiaceae</taxon>
        <taxon>Chlamydia/Chlamydophila group</taxon>
        <taxon>Chlamydia</taxon>
    </lineage>
</organism>
<sequence length="340" mass="37720">MLEKNPVISVKNLNKEIGNHRILNDISFSVCSGEILGIIGHSGSGKSTLLRCLDFLISPTSGSISIAGFHNSSAKEKISRSDFAKRVAYISQNGGLFLAKTVFENIAYPLKIRYPEMTKSLIEEKVNEALHFLNLYERKHAYPSRLSGGQKQKAAIAIAIVSDPQVLLCDEITSALDPRSTEDITDKLLQLNEERGITQVFVSHEIEVIKKLCTHTLVMHQGNIEELGPADKLFLNPYSSITEELFHMNSIAKGIYDHNENEEILRLGFPKGLAVQGMISQLIQGGQISINILSGDINLFRKIPLGFLIIVLSGEKKLRDRAKDILIGKGVIVQKFQKSR</sequence>
<proteinExistence type="inferred from homology"/>
<reference key="1">
    <citation type="journal article" date="2006" name="DNA Res.">
        <title>Genome sequence of the cat pathogen, Chlamydophila felis.</title>
        <authorList>
            <person name="Azuma Y."/>
            <person name="Hirakawa H."/>
            <person name="Yamashita A."/>
            <person name="Cai Y."/>
            <person name="Rahman M.A."/>
            <person name="Suzuki H."/>
            <person name="Mitaku S."/>
            <person name="Toh H."/>
            <person name="Goto S."/>
            <person name="Murakami T."/>
            <person name="Sugi K."/>
            <person name="Hayashi H."/>
            <person name="Fukushi H."/>
            <person name="Hattori M."/>
            <person name="Kuhara S."/>
            <person name="Shirai M."/>
        </authorList>
    </citation>
    <scope>NUCLEOTIDE SEQUENCE [LARGE SCALE GENOMIC DNA]</scope>
    <source>
        <strain>Fe/C-56</strain>
    </source>
</reference>
<name>METN_CHLFF</name>
<keyword id="KW-0029">Amino-acid transport</keyword>
<keyword id="KW-0067">ATP-binding</keyword>
<keyword id="KW-0997">Cell inner membrane</keyword>
<keyword id="KW-1003">Cell membrane</keyword>
<keyword id="KW-0472">Membrane</keyword>
<keyword id="KW-0547">Nucleotide-binding</keyword>
<keyword id="KW-1278">Translocase</keyword>
<keyword id="KW-0813">Transport</keyword>
<feature type="chain" id="PRO_0000270281" description="Methionine import ATP-binding protein MetN">
    <location>
        <begin position="1"/>
        <end position="340"/>
    </location>
</feature>
<feature type="domain" description="ABC transporter" evidence="1">
    <location>
        <begin position="8"/>
        <end position="246"/>
    </location>
</feature>
<feature type="binding site" evidence="1">
    <location>
        <begin position="40"/>
        <end position="47"/>
    </location>
    <ligand>
        <name>ATP</name>
        <dbReference type="ChEBI" id="CHEBI:30616"/>
    </ligand>
</feature>
<evidence type="ECO:0000255" key="1">
    <source>
        <dbReference type="HAMAP-Rule" id="MF_01719"/>
    </source>
</evidence>
<accession>Q254K9</accession>
<dbReference type="EC" id="7.4.2.11" evidence="1"/>
<dbReference type="EMBL" id="AP006861">
    <property type="protein sequence ID" value="BAE81279.1"/>
    <property type="molecule type" value="Genomic_DNA"/>
</dbReference>
<dbReference type="RefSeq" id="WP_011458059.1">
    <property type="nucleotide sequence ID" value="NC_007899.1"/>
</dbReference>
<dbReference type="SMR" id="Q254K9"/>
<dbReference type="STRING" id="264202.CF0507"/>
<dbReference type="KEGG" id="cfe:CF0507"/>
<dbReference type="eggNOG" id="COG1135">
    <property type="taxonomic scope" value="Bacteria"/>
</dbReference>
<dbReference type="HOGENOM" id="CLU_000604_1_3_0"/>
<dbReference type="OrthoDB" id="9804199at2"/>
<dbReference type="Proteomes" id="UP000001260">
    <property type="component" value="Chromosome"/>
</dbReference>
<dbReference type="GO" id="GO:0005886">
    <property type="term" value="C:plasma membrane"/>
    <property type="evidence" value="ECO:0007669"/>
    <property type="project" value="UniProtKB-SubCell"/>
</dbReference>
<dbReference type="GO" id="GO:0033232">
    <property type="term" value="F:ABC-type D-methionine transporter activity"/>
    <property type="evidence" value="ECO:0007669"/>
    <property type="project" value="UniProtKB-EC"/>
</dbReference>
<dbReference type="GO" id="GO:0005524">
    <property type="term" value="F:ATP binding"/>
    <property type="evidence" value="ECO:0007669"/>
    <property type="project" value="UniProtKB-KW"/>
</dbReference>
<dbReference type="GO" id="GO:0016887">
    <property type="term" value="F:ATP hydrolysis activity"/>
    <property type="evidence" value="ECO:0007669"/>
    <property type="project" value="InterPro"/>
</dbReference>
<dbReference type="Gene3D" id="3.30.70.260">
    <property type="match status" value="1"/>
</dbReference>
<dbReference type="Gene3D" id="3.40.50.300">
    <property type="entry name" value="P-loop containing nucleotide triphosphate hydrolases"/>
    <property type="match status" value="1"/>
</dbReference>
<dbReference type="InterPro" id="IPR003593">
    <property type="entry name" value="AAA+_ATPase"/>
</dbReference>
<dbReference type="InterPro" id="IPR003439">
    <property type="entry name" value="ABC_transporter-like_ATP-bd"/>
</dbReference>
<dbReference type="InterPro" id="IPR017871">
    <property type="entry name" value="ABC_transporter-like_CS"/>
</dbReference>
<dbReference type="InterPro" id="IPR045865">
    <property type="entry name" value="ACT-like_dom_sf"/>
</dbReference>
<dbReference type="InterPro" id="IPR050086">
    <property type="entry name" value="MetN_ABC_transporter-like"/>
</dbReference>
<dbReference type="InterPro" id="IPR018449">
    <property type="entry name" value="NIL_domain"/>
</dbReference>
<dbReference type="InterPro" id="IPR027417">
    <property type="entry name" value="P-loop_NTPase"/>
</dbReference>
<dbReference type="PANTHER" id="PTHR43166">
    <property type="entry name" value="AMINO ACID IMPORT ATP-BINDING PROTEIN"/>
    <property type="match status" value="1"/>
</dbReference>
<dbReference type="PANTHER" id="PTHR43166:SF30">
    <property type="entry name" value="METHIONINE IMPORT ATP-BINDING PROTEIN METN"/>
    <property type="match status" value="1"/>
</dbReference>
<dbReference type="Pfam" id="PF00005">
    <property type="entry name" value="ABC_tran"/>
    <property type="match status" value="1"/>
</dbReference>
<dbReference type="Pfam" id="PF09383">
    <property type="entry name" value="NIL"/>
    <property type="match status" value="1"/>
</dbReference>
<dbReference type="SMART" id="SM00382">
    <property type="entry name" value="AAA"/>
    <property type="match status" value="1"/>
</dbReference>
<dbReference type="SMART" id="SM00930">
    <property type="entry name" value="NIL"/>
    <property type="match status" value="1"/>
</dbReference>
<dbReference type="SUPFAM" id="SSF55021">
    <property type="entry name" value="ACT-like"/>
    <property type="match status" value="1"/>
</dbReference>
<dbReference type="SUPFAM" id="SSF52540">
    <property type="entry name" value="P-loop containing nucleoside triphosphate hydrolases"/>
    <property type="match status" value="1"/>
</dbReference>
<dbReference type="PROSITE" id="PS00211">
    <property type="entry name" value="ABC_TRANSPORTER_1"/>
    <property type="match status" value="1"/>
</dbReference>
<dbReference type="PROSITE" id="PS50893">
    <property type="entry name" value="ABC_TRANSPORTER_2"/>
    <property type="match status" value="1"/>
</dbReference>
<dbReference type="PROSITE" id="PS51264">
    <property type="entry name" value="METN"/>
    <property type="match status" value="1"/>
</dbReference>
<protein>
    <recommendedName>
        <fullName evidence="1">Methionine import ATP-binding protein MetN</fullName>
        <ecNumber evidence="1">7.4.2.11</ecNumber>
    </recommendedName>
</protein>
<gene>
    <name evidence="1" type="primary">metN</name>
    <name type="ordered locus">CF0507</name>
</gene>
<comment type="function">
    <text evidence="1">Part of the ABC transporter complex MetNIQ involved in methionine import. Responsible for energy coupling to the transport system.</text>
</comment>
<comment type="catalytic activity">
    <reaction evidence="1">
        <text>L-methionine(out) + ATP + H2O = L-methionine(in) + ADP + phosphate + H(+)</text>
        <dbReference type="Rhea" id="RHEA:29779"/>
        <dbReference type="ChEBI" id="CHEBI:15377"/>
        <dbReference type="ChEBI" id="CHEBI:15378"/>
        <dbReference type="ChEBI" id="CHEBI:30616"/>
        <dbReference type="ChEBI" id="CHEBI:43474"/>
        <dbReference type="ChEBI" id="CHEBI:57844"/>
        <dbReference type="ChEBI" id="CHEBI:456216"/>
        <dbReference type="EC" id="7.4.2.11"/>
    </reaction>
</comment>
<comment type="catalytic activity">
    <reaction evidence="1">
        <text>D-methionine(out) + ATP + H2O = D-methionine(in) + ADP + phosphate + H(+)</text>
        <dbReference type="Rhea" id="RHEA:29767"/>
        <dbReference type="ChEBI" id="CHEBI:15377"/>
        <dbReference type="ChEBI" id="CHEBI:15378"/>
        <dbReference type="ChEBI" id="CHEBI:30616"/>
        <dbReference type="ChEBI" id="CHEBI:43474"/>
        <dbReference type="ChEBI" id="CHEBI:57932"/>
        <dbReference type="ChEBI" id="CHEBI:456216"/>
        <dbReference type="EC" id="7.4.2.11"/>
    </reaction>
</comment>
<comment type="subunit">
    <text evidence="1">The complex is composed of two ATP-binding proteins (MetN), two transmembrane proteins (MetI) and a solute-binding protein (MetQ).</text>
</comment>
<comment type="subcellular location">
    <subcellularLocation>
        <location evidence="1">Cell inner membrane</location>
        <topology evidence="1">Peripheral membrane protein</topology>
    </subcellularLocation>
</comment>
<comment type="similarity">
    <text evidence="1">Belongs to the ABC transporter superfamily. Methionine importer (TC 3.A.1.24) family.</text>
</comment>